<reference key="1">
    <citation type="journal article" date="2009" name="J. Bacteriol.">
        <title>Complete genome sequence of Rhodobacter sphaeroides KD131.</title>
        <authorList>
            <person name="Lim S.-K."/>
            <person name="Kim S.J."/>
            <person name="Cha S.H."/>
            <person name="Oh Y.-K."/>
            <person name="Rhee H.-J."/>
            <person name="Kim M.-S."/>
            <person name="Lee J.K."/>
        </authorList>
    </citation>
    <scope>NUCLEOTIDE SEQUENCE [LARGE SCALE GENOMIC DNA]</scope>
    <source>
        <strain>KD131 / KCTC 12085</strain>
    </source>
</reference>
<proteinExistence type="inferred from homology"/>
<comment type="function">
    <text evidence="1">Binds directly to 23S ribosomal RNA and is necessary for the in vitro assembly process of the 50S ribosomal subunit. It is not involved in the protein synthesizing functions of that subunit.</text>
</comment>
<comment type="similarity">
    <text evidence="1">Belongs to the bacterial ribosomal protein bL20 family.</text>
</comment>
<organism>
    <name type="scientific">Cereibacter sphaeroides (strain KD131 / KCTC 12085)</name>
    <name type="common">Rhodobacter sphaeroides</name>
    <dbReference type="NCBI Taxonomy" id="557760"/>
    <lineage>
        <taxon>Bacteria</taxon>
        <taxon>Pseudomonadati</taxon>
        <taxon>Pseudomonadota</taxon>
        <taxon>Alphaproteobacteria</taxon>
        <taxon>Rhodobacterales</taxon>
        <taxon>Paracoccaceae</taxon>
        <taxon>Cereibacter</taxon>
    </lineage>
</organism>
<gene>
    <name evidence="1" type="primary">rplT</name>
    <name type="ordered locus">RSKD131_0064</name>
</gene>
<evidence type="ECO:0000255" key="1">
    <source>
        <dbReference type="HAMAP-Rule" id="MF_00382"/>
    </source>
</evidence>
<evidence type="ECO:0000305" key="2"/>
<protein>
    <recommendedName>
        <fullName evidence="1">Large ribosomal subunit protein bL20</fullName>
    </recommendedName>
    <alternativeName>
        <fullName evidence="2">50S ribosomal protein L20</fullName>
    </alternativeName>
</protein>
<feature type="chain" id="PRO_1000193973" description="Large ribosomal subunit protein bL20">
    <location>
        <begin position="1"/>
        <end position="120"/>
    </location>
</feature>
<name>RL20_CERSK</name>
<keyword id="KW-0687">Ribonucleoprotein</keyword>
<keyword id="KW-0689">Ribosomal protein</keyword>
<keyword id="KW-0694">RNA-binding</keyword>
<keyword id="KW-0699">rRNA-binding</keyword>
<dbReference type="EMBL" id="CP001150">
    <property type="protein sequence ID" value="ACL99923.1"/>
    <property type="molecule type" value="Genomic_DNA"/>
</dbReference>
<dbReference type="RefSeq" id="WP_002722591.1">
    <property type="nucleotide sequence ID" value="NC_011963.1"/>
</dbReference>
<dbReference type="SMR" id="B9KLE1"/>
<dbReference type="GeneID" id="67445550"/>
<dbReference type="KEGG" id="rsk:RSKD131_0064"/>
<dbReference type="HOGENOM" id="CLU_123265_0_1_5"/>
<dbReference type="GO" id="GO:1990904">
    <property type="term" value="C:ribonucleoprotein complex"/>
    <property type="evidence" value="ECO:0007669"/>
    <property type="project" value="UniProtKB-KW"/>
</dbReference>
<dbReference type="GO" id="GO:0005840">
    <property type="term" value="C:ribosome"/>
    <property type="evidence" value="ECO:0007669"/>
    <property type="project" value="UniProtKB-KW"/>
</dbReference>
<dbReference type="GO" id="GO:0019843">
    <property type="term" value="F:rRNA binding"/>
    <property type="evidence" value="ECO:0007669"/>
    <property type="project" value="UniProtKB-UniRule"/>
</dbReference>
<dbReference type="GO" id="GO:0003735">
    <property type="term" value="F:structural constituent of ribosome"/>
    <property type="evidence" value="ECO:0007669"/>
    <property type="project" value="InterPro"/>
</dbReference>
<dbReference type="GO" id="GO:0000027">
    <property type="term" value="P:ribosomal large subunit assembly"/>
    <property type="evidence" value="ECO:0007669"/>
    <property type="project" value="UniProtKB-UniRule"/>
</dbReference>
<dbReference type="GO" id="GO:0006412">
    <property type="term" value="P:translation"/>
    <property type="evidence" value="ECO:0007669"/>
    <property type="project" value="InterPro"/>
</dbReference>
<dbReference type="CDD" id="cd07026">
    <property type="entry name" value="Ribosomal_L20"/>
    <property type="match status" value="1"/>
</dbReference>
<dbReference type="FunFam" id="1.10.1900.20:FF:000001">
    <property type="entry name" value="50S ribosomal protein L20"/>
    <property type="match status" value="1"/>
</dbReference>
<dbReference type="Gene3D" id="6.10.160.10">
    <property type="match status" value="1"/>
</dbReference>
<dbReference type="Gene3D" id="1.10.1900.20">
    <property type="entry name" value="Ribosomal protein L20"/>
    <property type="match status" value="1"/>
</dbReference>
<dbReference type="HAMAP" id="MF_00382">
    <property type="entry name" value="Ribosomal_bL20"/>
    <property type="match status" value="1"/>
</dbReference>
<dbReference type="InterPro" id="IPR005813">
    <property type="entry name" value="Ribosomal_bL20"/>
</dbReference>
<dbReference type="InterPro" id="IPR049946">
    <property type="entry name" value="RIBOSOMAL_L20_CS"/>
</dbReference>
<dbReference type="InterPro" id="IPR035566">
    <property type="entry name" value="Ribosomal_protein_bL20_C"/>
</dbReference>
<dbReference type="NCBIfam" id="TIGR01032">
    <property type="entry name" value="rplT_bact"/>
    <property type="match status" value="1"/>
</dbReference>
<dbReference type="PANTHER" id="PTHR10986">
    <property type="entry name" value="39S RIBOSOMAL PROTEIN L20"/>
    <property type="match status" value="1"/>
</dbReference>
<dbReference type="Pfam" id="PF00453">
    <property type="entry name" value="Ribosomal_L20"/>
    <property type="match status" value="1"/>
</dbReference>
<dbReference type="PRINTS" id="PR00062">
    <property type="entry name" value="RIBOSOMALL20"/>
</dbReference>
<dbReference type="SUPFAM" id="SSF74731">
    <property type="entry name" value="Ribosomal protein L20"/>
    <property type="match status" value="1"/>
</dbReference>
<dbReference type="PROSITE" id="PS00937">
    <property type="entry name" value="RIBOSOMAL_L20"/>
    <property type="match status" value="1"/>
</dbReference>
<accession>B9KLE1</accession>
<sequence>MSRVKSGKVTHARHRKVIKQAKGYYAARSTNFRTATQAVDKANQYATRDRKARKRNFRALWIQRINAAVRLFDIEMTYSRFINGLSKAGIEVDRKVLADLAVHEPEAFNAIAAQAKAALA</sequence>